<organism>
    <name type="scientific">Cellvibrio japonicus (strain Ueda107)</name>
    <name type="common">Pseudomonas fluorescens subsp. cellulosa</name>
    <dbReference type="NCBI Taxonomy" id="498211"/>
    <lineage>
        <taxon>Bacteria</taxon>
        <taxon>Pseudomonadati</taxon>
        <taxon>Pseudomonadota</taxon>
        <taxon>Gammaproteobacteria</taxon>
        <taxon>Cellvibrionales</taxon>
        <taxon>Cellvibrionaceae</taxon>
        <taxon>Cellvibrio</taxon>
    </lineage>
</organism>
<feature type="chain" id="PRO_1000187743" description="Ubiquinone/menaquinone biosynthesis C-methyltransferase UbiE">
    <location>
        <begin position="1"/>
        <end position="249"/>
    </location>
</feature>
<feature type="binding site" evidence="1">
    <location>
        <position position="72"/>
    </location>
    <ligand>
        <name>S-adenosyl-L-methionine</name>
        <dbReference type="ChEBI" id="CHEBI:59789"/>
    </ligand>
</feature>
<feature type="binding site" evidence="1">
    <location>
        <position position="93"/>
    </location>
    <ligand>
        <name>S-adenosyl-L-methionine</name>
        <dbReference type="ChEBI" id="CHEBI:59789"/>
    </ligand>
</feature>
<feature type="binding site" evidence="1">
    <location>
        <begin position="121"/>
        <end position="122"/>
    </location>
    <ligand>
        <name>S-adenosyl-L-methionine</name>
        <dbReference type="ChEBI" id="CHEBI:59789"/>
    </ligand>
</feature>
<keyword id="KW-0474">Menaquinone biosynthesis</keyword>
<keyword id="KW-0489">Methyltransferase</keyword>
<keyword id="KW-1185">Reference proteome</keyword>
<keyword id="KW-0949">S-adenosyl-L-methionine</keyword>
<keyword id="KW-0808">Transferase</keyword>
<keyword id="KW-0831">Ubiquinone biosynthesis</keyword>
<protein>
    <recommendedName>
        <fullName evidence="1">Ubiquinone/menaquinone biosynthesis C-methyltransferase UbiE</fullName>
        <ecNumber evidence="1">2.1.1.163</ecNumber>
        <ecNumber evidence="1">2.1.1.201</ecNumber>
    </recommendedName>
    <alternativeName>
        <fullName evidence="1">2-methoxy-6-polyprenyl-1,4-benzoquinol methylase</fullName>
    </alternativeName>
    <alternativeName>
        <fullName evidence="1">Demethylmenaquinone methyltransferase</fullName>
    </alternativeName>
</protein>
<gene>
    <name evidence="1" type="primary">ubiE</name>
    <name type="ordered locus">CJA_3643</name>
</gene>
<proteinExistence type="inferred from homology"/>
<name>UBIE_CELJU</name>
<comment type="function">
    <text evidence="1">Methyltransferase required for the conversion of demethylmenaquinol (DMKH2) to menaquinol (MKH2) and the conversion of 2-polyprenyl-6-methoxy-1,4-benzoquinol (DDMQH2) to 2-polyprenyl-3-methyl-6-methoxy-1,4-benzoquinol (DMQH2).</text>
</comment>
<comment type="catalytic activity">
    <reaction evidence="1">
        <text>a 2-demethylmenaquinol + S-adenosyl-L-methionine = a menaquinol + S-adenosyl-L-homocysteine + H(+)</text>
        <dbReference type="Rhea" id="RHEA:42640"/>
        <dbReference type="Rhea" id="RHEA-COMP:9539"/>
        <dbReference type="Rhea" id="RHEA-COMP:9563"/>
        <dbReference type="ChEBI" id="CHEBI:15378"/>
        <dbReference type="ChEBI" id="CHEBI:18151"/>
        <dbReference type="ChEBI" id="CHEBI:55437"/>
        <dbReference type="ChEBI" id="CHEBI:57856"/>
        <dbReference type="ChEBI" id="CHEBI:59789"/>
        <dbReference type="EC" id="2.1.1.163"/>
    </reaction>
</comment>
<comment type="catalytic activity">
    <reaction evidence="1">
        <text>a 2-methoxy-6-(all-trans-polyprenyl)benzene-1,4-diol + S-adenosyl-L-methionine = a 5-methoxy-2-methyl-3-(all-trans-polyprenyl)benzene-1,4-diol + S-adenosyl-L-homocysteine + H(+)</text>
        <dbReference type="Rhea" id="RHEA:28286"/>
        <dbReference type="Rhea" id="RHEA-COMP:10858"/>
        <dbReference type="Rhea" id="RHEA-COMP:10859"/>
        <dbReference type="ChEBI" id="CHEBI:15378"/>
        <dbReference type="ChEBI" id="CHEBI:57856"/>
        <dbReference type="ChEBI" id="CHEBI:59789"/>
        <dbReference type="ChEBI" id="CHEBI:84166"/>
        <dbReference type="ChEBI" id="CHEBI:84167"/>
        <dbReference type="EC" id="2.1.1.201"/>
    </reaction>
</comment>
<comment type="pathway">
    <text evidence="1">Quinol/quinone metabolism; menaquinone biosynthesis; menaquinol from 1,4-dihydroxy-2-naphthoate: step 2/2.</text>
</comment>
<comment type="pathway">
    <text evidence="1">Cofactor biosynthesis; ubiquinone biosynthesis.</text>
</comment>
<comment type="similarity">
    <text evidence="1">Belongs to the class I-like SAM-binding methyltransferase superfamily. MenG/UbiE family.</text>
</comment>
<evidence type="ECO:0000255" key="1">
    <source>
        <dbReference type="HAMAP-Rule" id="MF_01813"/>
    </source>
</evidence>
<reference key="1">
    <citation type="journal article" date="2008" name="J. Bacteriol.">
        <title>Insights into plant cell wall degradation from the genome sequence of the soil bacterium Cellvibrio japonicus.</title>
        <authorList>
            <person name="DeBoy R.T."/>
            <person name="Mongodin E.F."/>
            <person name="Fouts D.E."/>
            <person name="Tailford L.E."/>
            <person name="Khouri H."/>
            <person name="Emerson J.B."/>
            <person name="Mohamoud Y."/>
            <person name="Watkins K."/>
            <person name="Henrissat B."/>
            <person name="Gilbert H.J."/>
            <person name="Nelson K.E."/>
        </authorList>
    </citation>
    <scope>NUCLEOTIDE SEQUENCE [LARGE SCALE GENOMIC DNA]</scope>
    <source>
        <strain>Ueda107</strain>
    </source>
</reference>
<dbReference type="EC" id="2.1.1.163" evidence="1"/>
<dbReference type="EC" id="2.1.1.201" evidence="1"/>
<dbReference type="EMBL" id="CP000934">
    <property type="protein sequence ID" value="ACE84295.1"/>
    <property type="molecule type" value="Genomic_DNA"/>
</dbReference>
<dbReference type="RefSeq" id="WP_012489218.1">
    <property type="nucleotide sequence ID" value="NC_010995.1"/>
</dbReference>
<dbReference type="SMR" id="B3PH48"/>
<dbReference type="STRING" id="498211.CJA_3643"/>
<dbReference type="KEGG" id="cja:CJA_3643"/>
<dbReference type="eggNOG" id="COG2226">
    <property type="taxonomic scope" value="Bacteria"/>
</dbReference>
<dbReference type="HOGENOM" id="CLU_037990_0_0_6"/>
<dbReference type="OrthoDB" id="9808140at2"/>
<dbReference type="UniPathway" id="UPA00079">
    <property type="reaction ID" value="UER00169"/>
</dbReference>
<dbReference type="UniPathway" id="UPA00232"/>
<dbReference type="Proteomes" id="UP000001036">
    <property type="component" value="Chromosome"/>
</dbReference>
<dbReference type="GO" id="GO:0008425">
    <property type="term" value="F:2-methoxy-6-polyprenyl-1,4-benzoquinol methyltransferase activity"/>
    <property type="evidence" value="ECO:0007669"/>
    <property type="project" value="UniProtKB-UniRule"/>
</dbReference>
<dbReference type="GO" id="GO:0043770">
    <property type="term" value="F:demethylmenaquinone methyltransferase activity"/>
    <property type="evidence" value="ECO:0007669"/>
    <property type="project" value="UniProtKB-UniRule"/>
</dbReference>
<dbReference type="GO" id="GO:0009060">
    <property type="term" value="P:aerobic respiration"/>
    <property type="evidence" value="ECO:0007669"/>
    <property type="project" value="UniProtKB-UniRule"/>
</dbReference>
<dbReference type="GO" id="GO:0009234">
    <property type="term" value="P:menaquinone biosynthetic process"/>
    <property type="evidence" value="ECO:0007669"/>
    <property type="project" value="UniProtKB-UniRule"/>
</dbReference>
<dbReference type="GO" id="GO:0032259">
    <property type="term" value="P:methylation"/>
    <property type="evidence" value="ECO:0007669"/>
    <property type="project" value="UniProtKB-KW"/>
</dbReference>
<dbReference type="CDD" id="cd02440">
    <property type="entry name" value="AdoMet_MTases"/>
    <property type="match status" value="1"/>
</dbReference>
<dbReference type="FunFam" id="3.40.50.150:FF:000014">
    <property type="entry name" value="Ubiquinone/menaquinone biosynthesis C-methyltransferase UbiE"/>
    <property type="match status" value="1"/>
</dbReference>
<dbReference type="Gene3D" id="3.40.50.150">
    <property type="entry name" value="Vaccinia Virus protein VP39"/>
    <property type="match status" value="1"/>
</dbReference>
<dbReference type="HAMAP" id="MF_01813">
    <property type="entry name" value="MenG_UbiE_methyltr"/>
    <property type="match status" value="1"/>
</dbReference>
<dbReference type="InterPro" id="IPR029063">
    <property type="entry name" value="SAM-dependent_MTases_sf"/>
</dbReference>
<dbReference type="InterPro" id="IPR004033">
    <property type="entry name" value="UbiE/COQ5_MeTrFase"/>
</dbReference>
<dbReference type="InterPro" id="IPR023576">
    <property type="entry name" value="UbiE/COQ5_MeTrFase_CS"/>
</dbReference>
<dbReference type="NCBIfam" id="TIGR01934">
    <property type="entry name" value="MenG_MenH_UbiE"/>
    <property type="match status" value="1"/>
</dbReference>
<dbReference type="NCBIfam" id="NF001240">
    <property type="entry name" value="PRK00216.1-1"/>
    <property type="match status" value="1"/>
</dbReference>
<dbReference type="NCBIfam" id="NF001244">
    <property type="entry name" value="PRK00216.1-5"/>
    <property type="match status" value="1"/>
</dbReference>
<dbReference type="PANTHER" id="PTHR43591:SF24">
    <property type="entry name" value="2-METHOXY-6-POLYPRENYL-1,4-BENZOQUINOL METHYLASE, MITOCHONDRIAL"/>
    <property type="match status" value="1"/>
</dbReference>
<dbReference type="PANTHER" id="PTHR43591">
    <property type="entry name" value="METHYLTRANSFERASE"/>
    <property type="match status" value="1"/>
</dbReference>
<dbReference type="Pfam" id="PF01209">
    <property type="entry name" value="Ubie_methyltran"/>
    <property type="match status" value="1"/>
</dbReference>
<dbReference type="SUPFAM" id="SSF53335">
    <property type="entry name" value="S-adenosyl-L-methionine-dependent methyltransferases"/>
    <property type="match status" value="1"/>
</dbReference>
<dbReference type="PROSITE" id="PS51608">
    <property type="entry name" value="SAM_MT_UBIE"/>
    <property type="match status" value="1"/>
</dbReference>
<dbReference type="PROSITE" id="PS01183">
    <property type="entry name" value="UBIE_1"/>
    <property type="match status" value="1"/>
</dbReference>
<dbReference type="PROSITE" id="PS01184">
    <property type="entry name" value="UBIE_2"/>
    <property type="match status" value="1"/>
</dbReference>
<accession>B3PH48</accession>
<sequence length="249" mass="27646">MSEKKTTHFGFQQVPVEEKAQRVAEVFHSVAAKYDLMNDLMSGGIHRLWKRFTIEASGVRTGHKVLDIAGGTGDLSYQFARLVGSSGQVILADINASMLGVGRDRLIDRGIAGNIAFTQCDAQYLPFPDNTFDCITIAFGLRNVTDKDLALRAMQRVLKPGGRLLVLEFSKPHNELLSKAYDTYSFRILPFMGKLVTNDADSYRYLAESIRMHPDQQTLKGMMDDAGFVNTEFHNMTGGIVALHKGIKP</sequence>